<accession>Q46618</accession>
<dbReference type="EMBL" id="U56662">
    <property type="protein sequence ID" value="AAB49172.1"/>
    <property type="status" value="ALT_INIT"/>
    <property type="molecule type" value="Genomic_DNA"/>
</dbReference>
<dbReference type="RefSeq" id="WP_033477547.1">
    <property type="nucleotide sequence ID" value="NZ_RQKG01000002.1"/>
</dbReference>
<dbReference type="PATRIC" id="fig|665029.3.peg.561"/>
<dbReference type="GO" id="GO:0005576">
    <property type="term" value="C:extracellular region"/>
    <property type="evidence" value="ECO:0007669"/>
    <property type="project" value="UniProtKB-SubCell"/>
</dbReference>
<dbReference type="GO" id="GO:0009289">
    <property type="term" value="C:pilus"/>
    <property type="evidence" value="ECO:0007669"/>
    <property type="project" value="UniProtKB-SubCell"/>
</dbReference>
<evidence type="ECO:0000250" key="1"/>
<evidence type="ECO:0000256" key="2">
    <source>
        <dbReference type="SAM" id="MobiDB-lite"/>
    </source>
</evidence>
<evidence type="ECO:0000269" key="3">
    <source>
    </source>
</evidence>
<evidence type="ECO:0000305" key="4"/>
<feature type="chain" id="PRO_0000226251" description="Hrp pili protein HrpA">
    <location>
        <begin position="1"/>
        <end position="68"/>
    </location>
</feature>
<feature type="region of interest" description="Disordered" evidence="2">
    <location>
        <begin position="1"/>
        <end position="68"/>
    </location>
</feature>
<feature type="compositionally biased region" description="Low complexity" evidence="2">
    <location>
        <begin position="1"/>
        <end position="20"/>
    </location>
</feature>
<feature type="compositionally biased region" description="Polar residues" evidence="2">
    <location>
        <begin position="21"/>
        <end position="44"/>
    </location>
</feature>
<gene>
    <name type="primary">hrpA</name>
</gene>
<sequence length="68" mass="6914">MAGSSLTSASTSASKTLESAMGQSLTESANAQASKMKMDTQNSILDGKMDSASKSINSGHNAAKAIQF</sequence>
<comment type="function">
    <text evidence="3">Major structure protein of the hrp pilus, which is a component of the type III secretion system (T3SS, Hrp secretion system) required for effector protein delivery, parasitism, and pathogenicity. The hrp pilus functions as a conduit for protein delivery into the host cell. HrpA is required for the secretion of HrpN and DspA/E.</text>
</comment>
<comment type="subcellular location">
    <subcellularLocation>
        <location evidence="1">Secreted</location>
    </subcellularLocation>
    <subcellularLocation>
        <location evidence="1">Fimbrium</location>
    </subcellularLocation>
    <text evidence="1">Extracellular and secreted via type III secretion system.</text>
</comment>
<comment type="similarity">
    <text evidence="4">Belongs to the HrpA type 2 family.</text>
</comment>
<comment type="sequence caution" evidence="4">
    <conflict type="erroneous initiation">
        <sequence resource="EMBL-CDS" id="AAB49172"/>
    </conflict>
    <text>Extended N-terminus.</text>
</comment>
<keyword id="KW-0281">Fimbrium</keyword>
<keyword id="KW-0964">Secreted</keyword>
<keyword id="KW-0843">Virulence</keyword>
<reference key="1">
    <citation type="journal article" date="1995" name="Phytopathology">
        <title>Complementation groups II and III of the Erwinia amylovora hrp gene cluster are required for secretion of harpin.</title>
        <authorList>
            <person name="Kim J.F."/>
            <person name="Wei Z.-M."/>
            <person name="Beer S.V."/>
        </authorList>
    </citation>
    <scope>NUCLEOTIDE SEQUENCE [GENOMIC DNA]</scope>
    <source>
        <strain>Ea321</strain>
    </source>
</reference>
<reference key="2">
    <citation type="journal article" date="1997" name="J. Bacteriol.">
        <title>The hrpA and hrpC operons of Erwinia amylovora encode components of a type III pathway that secretes harpin.</title>
        <authorList>
            <person name="Kim J.F."/>
            <person name="Wei Z.-M."/>
            <person name="Beer S.V."/>
        </authorList>
    </citation>
    <scope>NUCLEOTIDE SEQUENCE [GENOMIC DNA]</scope>
    <source>
        <strain>Ea321</strain>
    </source>
</reference>
<reference key="3">
    <citation type="journal article" date="2001" name="Mol. Microbiol.">
        <title>Visualization of secreted Hrp and Avr proteins along the Hrp pilus during type III secretion in Erwinia amylovora and Pseudomonas syringae.</title>
        <authorList>
            <person name="Jin Q.-L."/>
            <person name="Hu W."/>
            <person name="Brown I."/>
            <person name="McGhee G."/>
            <person name="Hart P."/>
            <person name="Jones A.L."/>
            <person name="He S.Y."/>
        </authorList>
    </citation>
    <scope>FUNCTION</scope>
    <source>
        <strain>Ea110</strain>
    </source>
</reference>
<protein>
    <recommendedName>
        <fullName>Hrp pili protein HrpA</fullName>
    </recommendedName>
    <alternativeName>
        <fullName>T3SS pilin HrpA</fullName>
    </alternativeName>
</protein>
<name>HRPA_ERWAM</name>
<organism>
    <name type="scientific">Erwinia amylovora</name>
    <name type="common">Fire blight bacteria</name>
    <dbReference type="NCBI Taxonomy" id="552"/>
    <lineage>
        <taxon>Bacteria</taxon>
        <taxon>Pseudomonadati</taxon>
        <taxon>Pseudomonadota</taxon>
        <taxon>Gammaproteobacteria</taxon>
        <taxon>Enterobacterales</taxon>
        <taxon>Erwiniaceae</taxon>
        <taxon>Erwinia</taxon>
    </lineage>
</organism>
<proteinExistence type="inferred from homology"/>